<protein>
    <recommendedName>
        <fullName evidence="1">Large ribosomal subunit protein uL18</fullName>
    </recommendedName>
    <alternativeName>
        <fullName evidence="2">50S ribosomal protein L18</fullName>
    </alternativeName>
</protein>
<accession>A4YSK8</accession>
<name>RL18_BRASO</name>
<comment type="function">
    <text evidence="1">This is one of the proteins that bind and probably mediate the attachment of the 5S RNA into the large ribosomal subunit, where it forms part of the central protuberance.</text>
</comment>
<comment type="subunit">
    <text evidence="1">Part of the 50S ribosomal subunit; part of the 5S rRNA/L5/L18/L25 subcomplex. Contacts the 5S and 23S rRNAs.</text>
</comment>
<comment type="similarity">
    <text evidence="1">Belongs to the universal ribosomal protein uL18 family.</text>
</comment>
<proteinExistence type="inferred from homology"/>
<feature type="chain" id="PRO_1000052993" description="Large ribosomal subunit protein uL18">
    <location>
        <begin position="1"/>
        <end position="120"/>
    </location>
</feature>
<evidence type="ECO:0000255" key="1">
    <source>
        <dbReference type="HAMAP-Rule" id="MF_01337"/>
    </source>
</evidence>
<evidence type="ECO:0000305" key="2"/>
<dbReference type="EMBL" id="CU234118">
    <property type="protein sequence ID" value="CAL76884.1"/>
    <property type="molecule type" value="Genomic_DNA"/>
</dbReference>
<dbReference type="RefSeq" id="WP_011926054.1">
    <property type="nucleotide sequence ID" value="NC_009445.1"/>
</dbReference>
<dbReference type="SMR" id="A4YSK8"/>
<dbReference type="STRING" id="114615.BRADO3082"/>
<dbReference type="KEGG" id="bra:BRADO3082"/>
<dbReference type="eggNOG" id="COG0256">
    <property type="taxonomic scope" value="Bacteria"/>
</dbReference>
<dbReference type="HOGENOM" id="CLU_098841_0_1_5"/>
<dbReference type="OrthoDB" id="9810939at2"/>
<dbReference type="Proteomes" id="UP000001994">
    <property type="component" value="Chromosome"/>
</dbReference>
<dbReference type="GO" id="GO:0022625">
    <property type="term" value="C:cytosolic large ribosomal subunit"/>
    <property type="evidence" value="ECO:0007669"/>
    <property type="project" value="TreeGrafter"/>
</dbReference>
<dbReference type="GO" id="GO:0008097">
    <property type="term" value="F:5S rRNA binding"/>
    <property type="evidence" value="ECO:0007669"/>
    <property type="project" value="TreeGrafter"/>
</dbReference>
<dbReference type="GO" id="GO:0003735">
    <property type="term" value="F:structural constituent of ribosome"/>
    <property type="evidence" value="ECO:0007669"/>
    <property type="project" value="InterPro"/>
</dbReference>
<dbReference type="GO" id="GO:0006412">
    <property type="term" value="P:translation"/>
    <property type="evidence" value="ECO:0007669"/>
    <property type="project" value="UniProtKB-UniRule"/>
</dbReference>
<dbReference type="CDD" id="cd00432">
    <property type="entry name" value="Ribosomal_L18_L5e"/>
    <property type="match status" value="1"/>
</dbReference>
<dbReference type="FunFam" id="3.30.420.100:FF:000001">
    <property type="entry name" value="50S ribosomal protein L18"/>
    <property type="match status" value="1"/>
</dbReference>
<dbReference type="Gene3D" id="3.30.420.100">
    <property type="match status" value="1"/>
</dbReference>
<dbReference type="HAMAP" id="MF_01337_B">
    <property type="entry name" value="Ribosomal_uL18_B"/>
    <property type="match status" value="1"/>
</dbReference>
<dbReference type="InterPro" id="IPR004389">
    <property type="entry name" value="Ribosomal_uL18_bac-type"/>
</dbReference>
<dbReference type="InterPro" id="IPR005484">
    <property type="entry name" value="Ribosomal_uL18_bac/euk"/>
</dbReference>
<dbReference type="NCBIfam" id="TIGR00060">
    <property type="entry name" value="L18_bact"/>
    <property type="match status" value="1"/>
</dbReference>
<dbReference type="PANTHER" id="PTHR12899">
    <property type="entry name" value="39S RIBOSOMAL PROTEIN L18, MITOCHONDRIAL"/>
    <property type="match status" value="1"/>
</dbReference>
<dbReference type="PANTHER" id="PTHR12899:SF3">
    <property type="entry name" value="LARGE RIBOSOMAL SUBUNIT PROTEIN UL18M"/>
    <property type="match status" value="1"/>
</dbReference>
<dbReference type="Pfam" id="PF00861">
    <property type="entry name" value="Ribosomal_L18p"/>
    <property type="match status" value="1"/>
</dbReference>
<dbReference type="SUPFAM" id="SSF53137">
    <property type="entry name" value="Translational machinery components"/>
    <property type="match status" value="1"/>
</dbReference>
<sequence length="120" mass="13035">MSRAKVTNARRKQRVRLSLRRSAGGRPRLSVFRSSKHIYAQVIDDQKGETIASASSMEKEMRSAGNTGADIDAAKAVGKLLAERAVKAGIKEVVFDRGGYLYHGRVKALADAARESGLSF</sequence>
<organism>
    <name type="scientific">Bradyrhizobium sp. (strain ORS 278)</name>
    <dbReference type="NCBI Taxonomy" id="114615"/>
    <lineage>
        <taxon>Bacteria</taxon>
        <taxon>Pseudomonadati</taxon>
        <taxon>Pseudomonadota</taxon>
        <taxon>Alphaproteobacteria</taxon>
        <taxon>Hyphomicrobiales</taxon>
        <taxon>Nitrobacteraceae</taxon>
        <taxon>Bradyrhizobium</taxon>
    </lineage>
</organism>
<reference key="1">
    <citation type="journal article" date="2007" name="Science">
        <title>Legumes symbioses: absence of nod genes in photosynthetic bradyrhizobia.</title>
        <authorList>
            <person name="Giraud E."/>
            <person name="Moulin L."/>
            <person name="Vallenet D."/>
            <person name="Barbe V."/>
            <person name="Cytryn E."/>
            <person name="Avarre J.-C."/>
            <person name="Jaubert M."/>
            <person name="Simon D."/>
            <person name="Cartieaux F."/>
            <person name="Prin Y."/>
            <person name="Bena G."/>
            <person name="Hannibal L."/>
            <person name="Fardoux J."/>
            <person name="Kojadinovic M."/>
            <person name="Vuillet L."/>
            <person name="Lajus A."/>
            <person name="Cruveiller S."/>
            <person name="Rouy Z."/>
            <person name="Mangenot S."/>
            <person name="Segurens B."/>
            <person name="Dossat C."/>
            <person name="Franck W.L."/>
            <person name="Chang W.-S."/>
            <person name="Saunders E."/>
            <person name="Bruce D."/>
            <person name="Richardson P."/>
            <person name="Normand P."/>
            <person name="Dreyfus B."/>
            <person name="Pignol D."/>
            <person name="Stacey G."/>
            <person name="Emerich D."/>
            <person name="Vermeglio A."/>
            <person name="Medigue C."/>
            <person name="Sadowsky M."/>
        </authorList>
    </citation>
    <scope>NUCLEOTIDE SEQUENCE [LARGE SCALE GENOMIC DNA]</scope>
    <source>
        <strain>ORS 278</strain>
    </source>
</reference>
<keyword id="KW-1185">Reference proteome</keyword>
<keyword id="KW-0687">Ribonucleoprotein</keyword>
<keyword id="KW-0689">Ribosomal protein</keyword>
<keyword id="KW-0694">RNA-binding</keyword>
<keyword id="KW-0699">rRNA-binding</keyword>
<gene>
    <name evidence="1" type="primary">rplR</name>
    <name type="ordered locus">BRADO3082</name>
</gene>